<proteinExistence type="inferred from homology"/>
<protein>
    <recommendedName>
        <fullName evidence="1">Maturase K</fullName>
    </recommendedName>
    <alternativeName>
        <fullName evidence="1">Intron maturase</fullName>
    </alternativeName>
</protein>
<geneLocation type="chloroplast"/>
<comment type="function">
    <text evidence="1">Usually encoded in the trnK tRNA gene intron. Probably assists in splicing its own and other chloroplast group II introns.</text>
</comment>
<comment type="subcellular location">
    <subcellularLocation>
        <location>Plastid</location>
        <location>Chloroplast</location>
    </subcellularLocation>
</comment>
<comment type="similarity">
    <text evidence="1">Belongs to the intron maturase 2 family. MatK subfamily.</text>
</comment>
<organism>
    <name type="scientific">Anomochloa marantoidea</name>
    <name type="common">Herbaceous bamboo</name>
    <dbReference type="NCBI Taxonomy" id="38684"/>
    <lineage>
        <taxon>Eukaryota</taxon>
        <taxon>Viridiplantae</taxon>
        <taxon>Streptophyta</taxon>
        <taxon>Embryophyta</taxon>
        <taxon>Tracheophyta</taxon>
        <taxon>Spermatophyta</taxon>
        <taxon>Magnoliopsida</taxon>
        <taxon>Liliopsida</taxon>
        <taxon>Poales</taxon>
        <taxon>Poaceae</taxon>
        <taxon>Anomochlooideae</taxon>
        <taxon>Anomochloeae</taxon>
        <taxon>Anomochloa</taxon>
    </lineage>
</organism>
<sequence>MVKLEVYLEKQKFRQQYFVYPLLFQEYIYAFAHDHGLNGSEPVEILGRNNNKFSSVLVKRLIIRMYQQNFGINSVNHPNQNRLLDHNNYFYSQFYSHILSEGFAIVVEIPFSLRVLSCPEEKEIPKFQNLRSIHSLFPFLEDQFLHLHYISHIEIPYPIHLEIVVQLLQCRIQDVASLHLLRFFLNYYSNWNSLIISMKLIFLLKKENKRLFRFLYNSYVSECEFFFFFLRKQSSCLRLTSYGTFLERIHFYRKKEHFWVMYPGFFRKTLWVFMDPLMHYVRYQGKAILASKGTPLLMKKWKCYLANFWQYYFHFWIQPRRIQQKPLANSCFDFLGYLSSVTRNPLVVRNQMLENAFLIDTRIKKLDTIVPAISLIGSLSKAQFCTGSGHPISKPIWTDLSDWDILDRFGRICRNIFHYYSGSSKKQTLYRIKYILRLSCARTLARKHKSTVRTFMQRLGSVFLEEFFTEEEQVLSLIFTKTIPFSFHGSHSKRIWYLDIIRINDLVNYS</sequence>
<evidence type="ECO:0000255" key="1">
    <source>
        <dbReference type="HAMAP-Rule" id="MF_01390"/>
    </source>
</evidence>
<keyword id="KW-0150">Chloroplast</keyword>
<keyword id="KW-0507">mRNA processing</keyword>
<keyword id="KW-0934">Plastid</keyword>
<keyword id="KW-0694">RNA-binding</keyword>
<keyword id="KW-0819">tRNA processing</keyword>
<feature type="chain" id="PRO_0000143237" description="Maturase K">
    <location>
        <begin position="1"/>
        <end position="510"/>
    </location>
</feature>
<name>MATK_ANOMA</name>
<reference key="1">
    <citation type="journal article" date="1999" name="Ann. Mo. Bot. Gard.">
        <title>Phylogeny of Poaceae inferred from matK sequences.</title>
        <authorList>
            <person name="Hilu K.W."/>
            <person name="Alice L.A."/>
            <person name="Liang H."/>
        </authorList>
    </citation>
    <scope>NUCLEOTIDE SEQUENCE [GENOMIC DNA]</scope>
</reference>
<gene>
    <name evidence="1" type="primary">matK</name>
</gene>
<dbReference type="EMBL" id="AF164381">
    <property type="protein sequence ID" value="AAF66168.1"/>
    <property type="molecule type" value="Genomic_DNA"/>
</dbReference>
<dbReference type="GO" id="GO:0009507">
    <property type="term" value="C:chloroplast"/>
    <property type="evidence" value="ECO:0007669"/>
    <property type="project" value="UniProtKB-SubCell"/>
</dbReference>
<dbReference type="GO" id="GO:0003723">
    <property type="term" value="F:RNA binding"/>
    <property type="evidence" value="ECO:0007669"/>
    <property type="project" value="UniProtKB-KW"/>
</dbReference>
<dbReference type="GO" id="GO:0006397">
    <property type="term" value="P:mRNA processing"/>
    <property type="evidence" value="ECO:0007669"/>
    <property type="project" value="UniProtKB-KW"/>
</dbReference>
<dbReference type="GO" id="GO:0008380">
    <property type="term" value="P:RNA splicing"/>
    <property type="evidence" value="ECO:0007669"/>
    <property type="project" value="UniProtKB-UniRule"/>
</dbReference>
<dbReference type="GO" id="GO:0008033">
    <property type="term" value="P:tRNA processing"/>
    <property type="evidence" value="ECO:0007669"/>
    <property type="project" value="UniProtKB-KW"/>
</dbReference>
<dbReference type="HAMAP" id="MF_01390">
    <property type="entry name" value="MatK"/>
    <property type="match status" value="1"/>
</dbReference>
<dbReference type="InterPro" id="IPR024937">
    <property type="entry name" value="Domain_X"/>
</dbReference>
<dbReference type="InterPro" id="IPR002866">
    <property type="entry name" value="Maturase_MatK"/>
</dbReference>
<dbReference type="InterPro" id="IPR024942">
    <property type="entry name" value="Maturase_MatK_N"/>
</dbReference>
<dbReference type="PANTHER" id="PTHR34811">
    <property type="entry name" value="MATURASE K"/>
    <property type="match status" value="1"/>
</dbReference>
<dbReference type="PANTHER" id="PTHR34811:SF1">
    <property type="entry name" value="MATURASE K"/>
    <property type="match status" value="1"/>
</dbReference>
<dbReference type="Pfam" id="PF01348">
    <property type="entry name" value="Intron_maturas2"/>
    <property type="match status" value="1"/>
</dbReference>
<dbReference type="Pfam" id="PF01824">
    <property type="entry name" value="MatK_N"/>
    <property type="match status" value="1"/>
</dbReference>
<accession>Q9MV08</accession>